<proteinExistence type="inferred from homology"/>
<organism>
    <name type="scientific">Rhodococcus jostii (strain RHA1)</name>
    <dbReference type="NCBI Taxonomy" id="101510"/>
    <lineage>
        <taxon>Bacteria</taxon>
        <taxon>Bacillati</taxon>
        <taxon>Actinomycetota</taxon>
        <taxon>Actinomycetes</taxon>
        <taxon>Mycobacteriales</taxon>
        <taxon>Nocardiaceae</taxon>
        <taxon>Rhodococcus</taxon>
    </lineage>
</organism>
<feature type="chain" id="PRO_0000291291" description="UPF0182 protein RHA1_ro06389">
    <location>
        <begin position="1"/>
        <end position="992"/>
    </location>
</feature>
<feature type="transmembrane region" description="Helical" evidence="1">
    <location>
        <begin position="18"/>
        <end position="38"/>
    </location>
</feature>
<feature type="transmembrane region" description="Helical" evidence="1">
    <location>
        <begin position="63"/>
        <end position="83"/>
    </location>
</feature>
<feature type="transmembrane region" description="Helical" evidence="1">
    <location>
        <begin position="114"/>
        <end position="134"/>
    </location>
</feature>
<feature type="transmembrane region" description="Helical" evidence="1">
    <location>
        <begin position="174"/>
        <end position="194"/>
    </location>
</feature>
<feature type="transmembrane region" description="Helical" evidence="1">
    <location>
        <begin position="211"/>
        <end position="231"/>
    </location>
</feature>
<feature type="transmembrane region" description="Helical" evidence="1">
    <location>
        <begin position="260"/>
        <end position="280"/>
    </location>
</feature>
<feature type="transmembrane region" description="Helical" evidence="1">
    <location>
        <begin position="288"/>
        <end position="308"/>
    </location>
</feature>
<feature type="region of interest" description="Disordered" evidence="2">
    <location>
        <begin position="904"/>
        <end position="948"/>
    </location>
</feature>
<feature type="compositionally biased region" description="Low complexity" evidence="2">
    <location>
        <begin position="908"/>
        <end position="934"/>
    </location>
</feature>
<accession>Q0S2S0</accession>
<evidence type="ECO:0000255" key="1">
    <source>
        <dbReference type="HAMAP-Rule" id="MF_01600"/>
    </source>
</evidence>
<evidence type="ECO:0000256" key="2">
    <source>
        <dbReference type="SAM" id="MobiDB-lite"/>
    </source>
</evidence>
<name>Y6389_RHOJR</name>
<comment type="subcellular location">
    <subcellularLocation>
        <location evidence="1">Cell membrane</location>
        <topology evidence="1">Multi-pass membrane protein</topology>
    </subcellularLocation>
</comment>
<comment type="similarity">
    <text evidence="1">Belongs to the UPF0182 family.</text>
</comment>
<sequence>MGMRPPAGLPSLSKRSRVLLVLALVVAALLLVGPRLISTYTDWLWFGEVGFRGVFTTVLITRLLLFLVVGVVVGGIVWLALLLAYRSRPVFVPVSGPNDPVARYRTTVMTRLRLFGLAIPIAVGLLAGLIAQSSWVTVQLFVNGGAFGVADPEFGLDVGFYTFDLPFYRFVLNWLFVAVLLAFFASLVTHYIFGGLKLAGRGGALTNAARVQLAVLAGTFILLKAVAYWFDRYSLLSSSRKEPTFTGGSYTDMNAVLQAKLILLAIAVICAGAFFAAIFLRDLRIPAMATALLVLSSILVGAVWPLVVEQFSVRPNAADKESAYIERNIAATRQAYGITDDKVEYQDYQGYGTKPPRDVPADVMTIENTRLLDPNILSRTFTQQQQLKNFYGFPPTLDIDRYDIDGQLRDYIVAARELSSKSLTGNQTDWINKHTVYTHGNGLVAAPANRVNAAAGESAEEAANSNSGYPVYMVSDIASQEAGNQVIPVQQPRIYYGEVIADTDADYAIVGGSGGSDPREYDTDTSRYTYTGSGGVPIGNWFNRLAFAAKYTERNILFSGAIGSDSKIIYNRDPRDRVTHVAPWLTADGDSYPAVVDGKVVWIVDAYTTLQDYPYAQRSSLDGLVEDSIDQNTGRLLPRKEVSYIRNSVKATVDAYDGTVKLYQVDQNDPVLDAWMGVFPDAVQPADSIPDELRAHFRYPEDLFKVQREMLAKYHVDDPKEFFTNNAFWSVPSDPTIDTSANQPPYYVLVGDPETGKPSFNLTSAMVGYSREFLSAYLSVKSDPENYGKFTVLQLPTDTQTQGPQQTQNSMISDPRVASERTLLERSNKIQYGNLLTLPIADGGILYVEPMYTERSSTGPNTSTFPQLSRVLVSYREPPPSNSVRVGYAPTLAQALDQVFGAGTGSVATAPSAEEGTPPETGTTPPVDQGAAPAPTAPATPPSGTDVSAAVAELDASLDALTSAQRSGDFAAYGAALARVQKAVAAYEAIPK</sequence>
<keyword id="KW-1003">Cell membrane</keyword>
<keyword id="KW-0472">Membrane</keyword>
<keyword id="KW-0812">Transmembrane</keyword>
<keyword id="KW-1133">Transmembrane helix</keyword>
<protein>
    <recommendedName>
        <fullName evidence="1">UPF0182 protein RHA1_ro06389</fullName>
    </recommendedName>
</protein>
<reference key="1">
    <citation type="journal article" date="2006" name="Proc. Natl. Acad. Sci. U.S.A.">
        <title>The complete genome of Rhodococcus sp. RHA1 provides insights into a catabolic powerhouse.</title>
        <authorList>
            <person name="McLeod M.P."/>
            <person name="Warren R.L."/>
            <person name="Hsiao W.W.L."/>
            <person name="Araki N."/>
            <person name="Myhre M."/>
            <person name="Fernandes C."/>
            <person name="Miyazawa D."/>
            <person name="Wong W."/>
            <person name="Lillquist A.L."/>
            <person name="Wang D."/>
            <person name="Dosanjh M."/>
            <person name="Hara H."/>
            <person name="Petrescu A."/>
            <person name="Morin R.D."/>
            <person name="Yang G."/>
            <person name="Stott J.M."/>
            <person name="Schein J.E."/>
            <person name="Shin H."/>
            <person name="Smailus D."/>
            <person name="Siddiqui A.S."/>
            <person name="Marra M.A."/>
            <person name="Jones S.J.M."/>
            <person name="Holt R."/>
            <person name="Brinkman F.S.L."/>
            <person name="Miyauchi K."/>
            <person name="Fukuda M."/>
            <person name="Davies J.E."/>
            <person name="Mohn W.W."/>
            <person name="Eltis L.D."/>
        </authorList>
    </citation>
    <scope>NUCLEOTIDE SEQUENCE [LARGE SCALE GENOMIC DNA]</scope>
    <source>
        <strain>RHA1</strain>
    </source>
</reference>
<dbReference type="EMBL" id="CP000431">
    <property type="protein sequence ID" value="ABG98166.1"/>
    <property type="molecule type" value="Genomic_DNA"/>
</dbReference>
<dbReference type="RefSeq" id="WP_011598307.1">
    <property type="nucleotide sequence ID" value="NC_008268.1"/>
</dbReference>
<dbReference type="SMR" id="Q0S2S0"/>
<dbReference type="KEGG" id="rha:RHA1_ro06389"/>
<dbReference type="eggNOG" id="COG1615">
    <property type="taxonomic scope" value="Bacteria"/>
</dbReference>
<dbReference type="HOGENOM" id="CLU_007733_1_0_11"/>
<dbReference type="OrthoDB" id="9763654at2"/>
<dbReference type="Proteomes" id="UP000008710">
    <property type="component" value="Chromosome"/>
</dbReference>
<dbReference type="GO" id="GO:0005576">
    <property type="term" value="C:extracellular region"/>
    <property type="evidence" value="ECO:0007669"/>
    <property type="project" value="TreeGrafter"/>
</dbReference>
<dbReference type="GO" id="GO:0005886">
    <property type="term" value="C:plasma membrane"/>
    <property type="evidence" value="ECO:0007669"/>
    <property type="project" value="UniProtKB-SubCell"/>
</dbReference>
<dbReference type="HAMAP" id="MF_01600">
    <property type="entry name" value="UPF0182"/>
    <property type="match status" value="1"/>
</dbReference>
<dbReference type="InterPro" id="IPR005372">
    <property type="entry name" value="UPF0182"/>
</dbReference>
<dbReference type="NCBIfam" id="NF000825">
    <property type="entry name" value="PRK00068.1"/>
    <property type="match status" value="1"/>
</dbReference>
<dbReference type="NCBIfam" id="NF009097">
    <property type="entry name" value="PRK12438.1"/>
    <property type="match status" value="1"/>
</dbReference>
<dbReference type="PANTHER" id="PTHR39344">
    <property type="entry name" value="UPF0182 PROTEIN SLL1060"/>
    <property type="match status" value="1"/>
</dbReference>
<dbReference type="PANTHER" id="PTHR39344:SF1">
    <property type="entry name" value="UPF0182 PROTEIN SLL1060"/>
    <property type="match status" value="1"/>
</dbReference>
<dbReference type="Pfam" id="PF03699">
    <property type="entry name" value="UPF0182"/>
    <property type="match status" value="1"/>
</dbReference>
<gene>
    <name type="ordered locus">RHA1_ro06389</name>
</gene>